<reference key="1">
    <citation type="journal article" date="1992" name="Int. J. Pept. Protein Res.">
        <title>Isolation and characterization of glycosylated and non-glycosylated prolactins from alligator and crocodile.</title>
        <authorList>
            <person name="Noso T."/>
            <person name="Swanson P."/>
            <person name="Lance V.A."/>
            <person name="Kawauchi H."/>
        </authorList>
    </citation>
    <scope>PROTEIN SEQUENCE</scope>
    <source>
        <tissue>Pituitary</tissue>
    </source>
</reference>
<evidence type="ECO:0000250" key="1"/>
<evidence type="ECO:0000305" key="2"/>
<proteinExistence type="evidence at protein level"/>
<feature type="chain" id="PRO_0000181325" description="Prolactin-2">
    <location>
        <begin position="1"/>
        <end position="199"/>
    </location>
</feature>
<feature type="disulfide bond" evidence="1">
    <location>
        <begin position="4"/>
        <end position="11"/>
    </location>
</feature>
<feature type="disulfide bond" evidence="1">
    <location>
        <begin position="58"/>
        <end position="174"/>
    </location>
</feature>
<feature type="disulfide bond" evidence="1">
    <location>
        <begin position="191"/>
        <end position="199"/>
    </location>
</feature>
<organism>
    <name type="scientific">Crocodylus novaeguineae</name>
    <name type="common">Crocodile</name>
    <dbReference type="NCBI Taxonomy" id="8503"/>
    <lineage>
        <taxon>Eukaryota</taxon>
        <taxon>Metazoa</taxon>
        <taxon>Chordata</taxon>
        <taxon>Craniata</taxon>
        <taxon>Vertebrata</taxon>
        <taxon>Euteleostomi</taxon>
        <taxon>Archelosauria</taxon>
        <taxon>Archosauria</taxon>
        <taxon>Crocodylia</taxon>
        <taxon>Longirostres</taxon>
        <taxon>Crocodylidae</taxon>
        <taxon>Crocodylus</taxon>
    </lineage>
</organism>
<comment type="subcellular location">
    <subcellularLocation>
        <location>Secreted</location>
    </subcellularLocation>
</comment>
<comment type="similarity">
    <text evidence="2">Belongs to the somatotropin/prolactin family.</text>
</comment>
<protein>
    <recommendedName>
        <fullName>Prolactin-2</fullName>
    </recommendedName>
    <alternativeName>
        <fullName>Prolactin II</fullName>
        <shortName>PRL-II</shortName>
    </alternativeName>
</protein>
<dbReference type="SMR" id="P55754"/>
<dbReference type="GO" id="GO:0005615">
    <property type="term" value="C:extracellular space"/>
    <property type="evidence" value="ECO:0007669"/>
    <property type="project" value="TreeGrafter"/>
</dbReference>
<dbReference type="GO" id="GO:0005179">
    <property type="term" value="F:hormone activity"/>
    <property type="evidence" value="ECO:0007669"/>
    <property type="project" value="UniProtKB-KW"/>
</dbReference>
<dbReference type="GO" id="GO:0008284">
    <property type="term" value="P:positive regulation of cell population proliferation"/>
    <property type="evidence" value="ECO:0007669"/>
    <property type="project" value="TreeGrafter"/>
</dbReference>
<dbReference type="GO" id="GO:0046427">
    <property type="term" value="P:positive regulation of receptor signaling pathway via JAK-STAT"/>
    <property type="evidence" value="ECO:0007669"/>
    <property type="project" value="TreeGrafter"/>
</dbReference>
<dbReference type="GO" id="GO:0031667">
    <property type="term" value="P:response to nutrient levels"/>
    <property type="evidence" value="ECO:0007669"/>
    <property type="project" value="TreeGrafter"/>
</dbReference>
<dbReference type="CDD" id="cd10288">
    <property type="entry name" value="prolactin_like"/>
    <property type="match status" value="1"/>
</dbReference>
<dbReference type="FunFam" id="1.20.1250.10:FF:000003">
    <property type="entry name" value="Prolactin"/>
    <property type="match status" value="1"/>
</dbReference>
<dbReference type="Gene3D" id="1.20.1250.10">
    <property type="match status" value="1"/>
</dbReference>
<dbReference type="InterPro" id="IPR009079">
    <property type="entry name" value="4_helix_cytokine-like_core"/>
</dbReference>
<dbReference type="InterPro" id="IPR001400">
    <property type="entry name" value="Somatotropin/Prolactin"/>
</dbReference>
<dbReference type="InterPro" id="IPR018116">
    <property type="entry name" value="Somatotropin_CS"/>
</dbReference>
<dbReference type="PANTHER" id="PTHR11417:SF5">
    <property type="entry name" value="PROLACTIN"/>
    <property type="match status" value="1"/>
</dbReference>
<dbReference type="PANTHER" id="PTHR11417">
    <property type="entry name" value="SOMATOTROPIN,PROLACTIN"/>
    <property type="match status" value="1"/>
</dbReference>
<dbReference type="Pfam" id="PF00103">
    <property type="entry name" value="Hormone_1"/>
    <property type="match status" value="1"/>
</dbReference>
<dbReference type="PRINTS" id="PR00836">
    <property type="entry name" value="SOMATOTROPIN"/>
</dbReference>
<dbReference type="SUPFAM" id="SSF47266">
    <property type="entry name" value="4-helical cytokines"/>
    <property type="match status" value="1"/>
</dbReference>
<dbReference type="PROSITE" id="PS00266">
    <property type="entry name" value="SOMATOTROPIN_1"/>
    <property type="match status" value="1"/>
</dbReference>
<keyword id="KW-0903">Direct protein sequencing</keyword>
<keyword id="KW-1015">Disulfide bond</keyword>
<keyword id="KW-0372">Hormone</keyword>
<keyword id="KW-0964">Secreted</keyword>
<sequence length="199" mass="22757">LPICPSGSVNCQVSLGELFDRAVKLSHYIHFLSSEMFNEFDERYAQGRGFITKAVNGCHTASLTTPEDKEQAQQIHHEDLLNLVLGVLRSWNDPLLHLVTEVQRIKEAPDTILWKAVEIEEQNKRLLEGMEKIIGRVQPGDTGNEVYSRWSGLPSLQLADEDSRLFAFYNLLHCGRRDSHKIDNYLKLLKCRLIHDSNC</sequence>
<name>PRL2_CRONO</name>
<accession>P55754</accession>